<gene>
    <name type="primary">CDC42SE2</name>
</gene>
<dbReference type="EMBL" id="BC147986">
    <property type="protein sequence ID" value="AAI47987.1"/>
    <property type="molecule type" value="mRNA"/>
</dbReference>
<dbReference type="RefSeq" id="NP_001096007.1">
    <property type="nucleotide sequence ID" value="NM_001102537.1"/>
</dbReference>
<dbReference type="RefSeq" id="XP_005209117.1">
    <property type="nucleotide sequence ID" value="XM_005209060.3"/>
</dbReference>
<dbReference type="RefSeq" id="XP_005209119.1">
    <property type="nucleotide sequence ID" value="XM_005209062.3"/>
</dbReference>
<dbReference type="RefSeq" id="XP_010805364.1">
    <property type="nucleotide sequence ID" value="XM_010807062.1"/>
</dbReference>
<dbReference type="FunCoup" id="A6QLJ4">
    <property type="interactions" value="2617"/>
</dbReference>
<dbReference type="STRING" id="9913.ENSBTAP00000047577"/>
<dbReference type="PaxDb" id="9913-ENSBTAP00000047577"/>
<dbReference type="Ensembl" id="ENSBTAT00000052263.3">
    <property type="protein sequence ID" value="ENSBTAP00000047577.2"/>
    <property type="gene ID" value="ENSBTAG00000005961.6"/>
</dbReference>
<dbReference type="GeneID" id="789618"/>
<dbReference type="KEGG" id="bta:789618"/>
<dbReference type="CTD" id="56990"/>
<dbReference type="VEuPathDB" id="HostDB:ENSBTAG00000005961"/>
<dbReference type="VGNC" id="VGNC:27078">
    <property type="gene designation" value="CDC42SE2"/>
</dbReference>
<dbReference type="eggNOG" id="ENOG502S22R">
    <property type="taxonomic scope" value="Eukaryota"/>
</dbReference>
<dbReference type="GeneTree" id="ENSGT00940000158245"/>
<dbReference type="HOGENOM" id="CLU_173417_1_0_1"/>
<dbReference type="InParanoid" id="A6QLJ4"/>
<dbReference type="OMA" id="CCIGGQP"/>
<dbReference type="OrthoDB" id="5559822at2759"/>
<dbReference type="TreeFam" id="TF323815"/>
<dbReference type="Proteomes" id="UP000009136">
    <property type="component" value="Chromosome 7"/>
</dbReference>
<dbReference type="Bgee" id="ENSBTAG00000005961">
    <property type="expression patterns" value="Expressed in occipital lobe and 105 other cell types or tissues"/>
</dbReference>
<dbReference type="GO" id="GO:0042995">
    <property type="term" value="C:cell projection"/>
    <property type="evidence" value="ECO:0007669"/>
    <property type="project" value="UniProtKB-KW"/>
</dbReference>
<dbReference type="GO" id="GO:0005737">
    <property type="term" value="C:cytoplasm"/>
    <property type="evidence" value="ECO:0007669"/>
    <property type="project" value="UniProtKB-KW"/>
</dbReference>
<dbReference type="GO" id="GO:0005856">
    <property type="term" value="C:cytoskeleton"/>
    <property type="evidence" value="ECO:0007669"/>
    <property type="project" value="UniProtKB-SubCell"/>
</dbReference>
<dbReference type="GO" id="GO:0001891">
    <property type="term" value="C:phagocytic cup"/>
    <property type="evidence" value="ECO:0007669"/>
    <property type="project" value="UniProtKB-SubCell"/>
</dbReference>
<dbReference type="GO" id="GO:0005886">
    <property type="term" value="C:plasma membrane"/>
    <property type="evidence" value="ECO:0000318"/>
    <property type="project" value="GO_Central"/>
</dbReference>
<dbReference type="GO" id="GO:0035591">
    <property type="term" value="F:signaling adaptor activity"/>
    <property type="evidence" value="ECO:0007669"/>
    <property type="project" value="Ensembl"/>
</dbReference>
<dbReference type="GO" id="GO:0031267">
    <property type="term" value="F:small GTPase binding"/>
    <property type="evidence" value="ECO:0007669"/>
    <property type="project" value="InterPro"/>
</dbReference>
<dbReference type="GO" id="GO:0006909">
    <property type="term" value="P:phagocytosis"/>
    <property type="evidence" value="ECO:0007669"/>
    <property type="project" value="UniProtKB-KW"/>
</dbReference>
<dbReference type="GO" id="GO:0008360">
    <property type="term" value="P:regulation of cell shape"/>
    <property type="evidence" value="ECO:0007669"/>
    <property type="project" value="UniProtKB-KW"/>
</dbReference>
<dbReference type="GO" id="GO:0035023">
    <property type="term" value="P:regulation of Rho protein signal transduction"/>
    <property type="evidence" value="ECO:0007669"/>
    <property type="project" value="InterPro"/>
</dbReference>
<dbReference type="CDD" id="cd00132">
    <property type="entry name" value="CRIB"/>
    <property type="match status" value="1"/>
</dbReference>
<dbReference type="FunFam" id="3.90.810.10:FF:000004">
    <property type="entry name" value="CDC42 small effector protein 2"/>
    <property type="match status" value="1"/>
</dbReference>
<dbReference type="Gene3D" id="3.90.810.10">
    <property type="entry name" value="CRIB domain"/>
    <property type="match status" value="1"/>
</dbReference>
<dbReference type="InterPro" id="IPR000095">
    <property type="entry name" value="CRIB_dom"/>
</dbReference>
<dbReference type="InterPro" id="IPR036936">
    <property type="entry name" value="CRIB_dom_sf"/>
</dbReference>
<dbReference type="InterPro" id="IPR039056">
    <property type="entry name" value="SPEC"/>
</dbReference>
<dbReference type="PANTHER" id="PTHR13502:SF4">
    <property type="entry name" value="CDC42 SMALL EFFECTOR PROTEIN 2"/>
    <property type="match status" value="1"/>
</dbReference>
<dbReference type="PANTHER" id="PTHR13502">
    <property type="entry name" value="CDC42 SMALL EFFECTOR PROTEIN HOMOLOG"/>
    <property type="match status" value="1"/>
</dbReference>
<dbReference type="Pfam" id="PF00786">
    <property type="entry name" value="PBD"/>
    <property type="match status" value="1"/>
</dbReference>
<dbReference type="PROSITE" id="PS50108">
    <property type="entry name" value="CRIB"/>
    <property type="match status" value="1"/>
</dbReference>
<sequence>MSEFWLCFNCCIAEQPQPKRRRRIDRSMIGEPTNFVHTAHVGSGDLFSGMNSVSSIQNQMQSKGGYGGGMAANVQMQLVDTKAG</sequence>
<accession>A6QLJ4</accession>
<comment type="function">
    <text evidence="1">Probably involved in the organization of the actin cytoskeleton by acting downstream of CDC42, inducing actin filament assembly. Alters CDC42-induced cell shape changes. In activated T-cells, may play a role in CDC42-mediated F-actin accumulation at the immunological synapse. May play a role in early contractile events in phagocytosis in macrophages (By similarity).</text>
</comment>
<comment type="subunit">
    <text evidence="1">Interacts with CDC42 (in GTP-bound form). Interacts weakly with RAC1 and not at all with RHOA (By similarity).</text>
</comment>
<comment type="subcellular location">
    <subcellularLocation>
        <location evidence="1">Cytoplasm</location>
        <location evidence="1">Cytoskeleton</location>
    </subcellularLocation>
    <subcellularLocation>
        <location evidence="1">Cell membrane</location>
        <topology evidence="1">Lipid-anchor</topology>
    </subcellularLocation>
    <subcellularLocation>
        <location evidence="1">Cell projection</location>
        <location evidence="1">Phagocytic cup</location>
    </subcellularLocation>
    <text evidence="1">Recruited to the activated TCR prior actin polymerization. Localizes at the phagocytic cup of macrophages.</text>
</comment>
<comment type="domain">
    <text evidence="1">The CRIB domain mediates interaction with CDC42.</text>
</comment>
<comment type="similarity">
    <text evidence="4">Belongs to the CDC42SE/SPEC family.</text>
</comment>
<feature type="chain" id="PRO_0000334638" description="CDC42 small effector protein 2">
    <location>
        <begin position="1"/>
        <end position="84"/>
    </location>
</feature>
<feature type="domain" description="CRIB" evidence="3">
    <location>
        <begin position="29"/>
        <end position="42"/>
    </location>
</feature>
<feature type="modified residue" description="Phosphoserine" evidence="2">
    <location>
        <position position="43"/>
    </location>
</feature>
<feature type="modified residue" description="Phosphoserine" evidence="2">
    <location>
        <position position="52"/>
    </location>
</feature>
<feature type="lipid moiety-binding region" description="S-palmitoyl cysteine" evidence="1">
    <location>
        <position position="10"/>
    </location>
</feature>
<feature type="lipid moiety-binding region" description="S-palmitoyl cysteine" evidence="1">
    <location>
        <position position="11"/>
    </location>
</feature>
<name>C42S2_BOVIN</name>
<organism>
    <name type="scientific">Bos taurus</name>
    <name type="common">Bovine</name>
    <dbReference type="NCBI Taxonomy" id="9913"/>
    <lineage>
        <taxon>Eukaryota</taxon>
        <taxon>Metazoa</taxon>
        <taxon>Chordata</taxon>
        <taxon>Craniata</taxon>
        <taxon>Vertebrata</taxon>
        <taxon>Euteleostomi</taxon>
        <taxon>Mammalia</taxon>
        <taxon>Eutheria</taxon>
        <taxon>Laurasiatheria</taxon>
        <taxon>Artiodactyla</taxon>
        <taxon>Ruminantia</taxon>
        <taxon>Pecora</taxon>
        <taxon>Bovidae</taxon>
        <taxon>Bovinae</taxon>
        <taxon>Bos</taxon>
    </lineage>
</organism>
<reference key="1">
    <citation type="submission" date="2007-06" db="EMBL/GenBank/DDBJ databases">
        <authorList>
            <consortium name="NIH - Mammalian Gene Collection (MGC) project"/>
        </authorList>
    </citation>
    <scope>NUCLEOTIDE SEQUENCE [LARGE SCALE MRNA]</scope>
    <source>
        <strain>Hereford</strain>
        <tissue>Uterus</tissue>
    </source>
</reference>
<evidence type="ECO:0000250" key="1"/>
<evidence type="ECO:0000250" key="2">
    <source>
        <dbReference type="UniProtKB" id="Q8BGH7"/>
    </source>
</evidence>
<evidence type="ECO:0000255" key="3">
    <source>
        <dbReference type="PROSITE-ProRule" id="PRU00057"/>
    </source>
</evidence>
<evidence type="ECO:0000305" key="4"/>
<keyword id="KW-1003">Cell membrane</keyword>
<keyword id="KW-0966">Cell projection</keyword>
<keyword id="KW-0133">Cell shape</keyword>
<keyword id="KW-0963">Cytoplasm</keyword>
<keyword id="KW-0206">Cytoskeleton</keyword>
<keyword id="KW-0449">Lipoprotein</keyword>
<keyword id="KW-0472">Membrane</keyword>
<keyword id="KW-0564">Palmitate</keyword>
<keyword id="KW-0581">Phagocytosis</keyword>
<keyword id="KW-0597">Phosphoprotein</keyword>
<keyword id="KW-1185">Reference proteome</keyword>
<protein>
    <recommendedName>
        <fullName>CDC42 small effector protein 2</fullName>
    </recommendedName>
</protein>
<proteinExistence type="inferred from homology"/>